<dbReference type="EMBL" id="AL123456">
    <property type="protein sequence ID" value="CCP45360.1"/>
    <property type="molecule type" value="Genomic_DNA"/>
</dbReference>
<dbReference type="PIR" id="H70728">
    <property type="entry name" value="H70728"/>
</dbReference>
<dbReference type="RefSeq" id="WP_003899378.1">
    <property type="nucleotide sequence ID" value="NZ_NVQJ01000023.1"/>
</dbReference>
<dbReference type="SMR" id="P9WQI5"/>
<dbReference type="FunCoup" id="P9WQI5">
    <property type="interactions" value="18"/>
</dbReference>
<dbReference type="STRING" id="83332.Rv2564"/>
<dbReference type="PaxDb" id="83332-Rv2564"/>
<dbReference type="DNASU" id="887898"/>
<dbReference type="KEGG" id="mtu:Rv2564"/>
<dbReference type="KEGG" id="mtv:RVBD_2564"/>
<dbReference type="TubercuList" id="Rv2564"/>
<dbReference type="eggNOG" id="COG0664">
    <property type="taxonomic scope" value="Bacteria"/>
</dbReference>
<dbReference type="eggNOG" id="COG1136">
    <property type="taxonomic scope" value="Bacteria"/>
</dbReference>
<dbReference type="InParanoid" id="P9WQI5"/>
<dbReference type="OrthoDB" id="9802264at2"/>
<dbReference type="PhylomeDB" id="P9WQI5"/>
<dbReference type="Proteomes" id="UP000001584">
    <property type="component" value="Chromosome"/>
</dbReference>
<dbReference type="GO" id="GO:0005886">
    <property type="term" value="C:plasma membrane"/>
    <property type="evidence" value="ECO:0000318"/>
    <property type="project" value="GO_Central"/>
</dbReference>
<dbReference type="GO" id="GO:0005524">
    <property type="term" value="F:ATP binding"/>
    <property type="evidence" value="ECO:0007669"/>
    <property type="project" value="UniProtKB-KW"/>
</dbReference>
<dbReference type="GO" id="GO:0016887">
    <property type="term" value="F:ATP hydrolysis activity"/>
    <property type="evidence" value="ECO:0007669"/>
    <property type="project" value="InterPro"/>
</dbReference>
<dbReference type="GO" id="GO:0022857">
    <property type="term" value="F:transmembrane transporter activity"/>
    <property type="evidence" value="ECO:0000318"/>
    <property type="project" value="GO_Central"/>
</dbReference>
<dbReference type="GO" id="GO:0055085">
    <property type="term" value="P:transmembrane transport"/>
    <property type="evidence" value="ECO:0000318"/>
    <property type="project" value="GO_Central"/>
</dbReference>
<dbReference type="CDD" id="cd03255">
    <property type="entry name" value="ABC_MJ0796_LolCDE_FtsE"/>
    <property type="match status" value="1"/>
</dbReference>
<dbReference type="CDD" id="cd00038">
    <property type="entry name" value="CAP_ED"/>
    <property type="match status" value="1"/>
</dbReference>
<dbReference type="FunFam" id="3.40.50.300:FF:001448">
    <property type="entry name" value="Glutamine ABC transporter ATP-binding protein"/>
    <property type="match status" value="1"/>
</dbReference>
<dbReference type="FunFam" id="2.60.120.10:FF:000127">
    <property type="entry name" value="Glutamine-transport ATP-binding protein ABC transporter GLNQ"/>
    <property type="match status" value="1"/>
</dbReference>
<dbReference type="Gene3D" id="2.60.120.10">
    <property type="entry name" value="Jelly Rolls"/>
    <property type="match status" value="1"/>
</dbReference>
<dbReference type="Gene3D" id="3.40.50.300">
    <property type="entry name" value="P-loop containing nucleotide triphosphate hydrolases"/>
    <property type="match status" value="1"/>
</dbReference>
<dbReference type="InterPro" id="IPR003593">
    <property type="entry name" value="AAA+_ATPase"/>
</dbReference>
<dbReference type="InterPro" id="IPR003439">
    <property type="entry name" value="ABC_transporter-like_ATP-bd"/>
</dbReference>
<dbReference type="InterPro" id="IPR017871">
    <property type="entry name" value="ABC_transporter-like_CS"/>
</dbReference>
<dbReference type="InterPro" id="IPR015854">
    <property type="entry name" value="ABC_transpr_LolD-like"/>
</dbReference>
<dbReference type="InterPro" id="IPR018488">
    <property type="entry name" value="cNMP-bd_CS"/>
</dbReference>
<dbReference type="InterPro" id="IPR000595">
    <property type="entry name" value="cNMP-bd_dom"/>
</dbReference>
<dbReference type="InterPro" id="IPR018490">
    <property type="entry name" value="cNMP-bd_dom_sf"/>
</dbReference>
<dbReference type="InterPro" id="IPR017911">
    <property type="entry name" value="MacB-like_ATP-bd"/>
</dbReference>
<dbReference type="InterPro" id="IPR027417">
    <property type="entry name" value="P-loop_NTPase"/>
</dbReference>
<dbReference type="InterPro" id="IPR014710">
    <property type="entry name" value="RmlC-like_jellyroll"/>
</dbReference>
<dbReference type="PANTHER" id="PTHR24220">
    <property type="entry name" value="IMPORT ATP-BINDING PROTEIN"/>
    <property type="match status" value="1"/>
</dbReference>
<dbReference type="PANTHER" id="PTHR24220:SF689">
    <property type="entry name" value="LIPOPROTEIN-RELEASING SYSTEM ATP-BINDING PROTEIN LOLD"/>
    <property type="match status" value="1"/>
</dbReference>
<dbReference type="Pfam" id="PF00005">
    <property type="entry name" value="ABC_tran"/>
    <property type="match status" value="1"/>
</dbReference>
<dbReference type="Pfam" id="PF00027">
    <property type="entry name" value="cNMP_binding"/>
    <property type="match status" value="1"/>
</dbReference>
<dbReference type="PRINTS" id="PR00103">
    <property type="entry name" value="CAMPKINASE"/>
</dbReference>
<dbReference type="SMART" id="SM00382">
    <property type="entry name" value="AAA"/>
    <property type="match status" value="1"/>
</dbReference>
<dbReference type="SMART" id="SM00100">
    <property type="entry name" value="cNMP"/>
    <property type="match status" value="1"/>
</dbReference>
<dbReference type="SUPFAM" id="SSF51206">
    <property type="entry name" value="cAMP-binding domain-like"/>
    <property type="match status" value="1"/>
</dbReference>
<dbReference type="SUPFAM" id="SSF52540">
    <property type="entry name" value="P-loop containing nucleoside triphosphate hydrolases"/>
    <property type="match status" value="1"/>
</dbReference>
<dbReference type="PROSITE" id="PS00211">
    <property type="entry name" value="ABC_TRANSPORTER_1"/>
    <property type="match status" value="1"/>
</dbReference>
<dbReference type="PROSITE" id="PS50893">
    <property type="entry name" value="ABC_TRANSPORTER_2"/>
    <property type="match status" value="1"/>
</dbReference>
<dbReference type="PROSITE" id="PS00889">
    <property type="entry name" value="CNMP_BINDING_2"/>
    <property type="match status" value="1"/>
</dbReference>
<dbReference type="PROSITE" id="PS50042">
    <property type="entry name" value="CNMP_BINDING_3"/>
    <property type="match status" value="1"/>
</dbReference>
<gene>
    <name type="ordered locus">Rv2564</name>
    <name type="ORF">MTCY9C4.04c</name>
</gene>
<reference key="1">
    <citation type="journal article" date="1998" name="Nature">
        <title>Deciphering the biology of Mycobacterium tuberculosis from the complete genome sequence.</title>
        <authorList>
            <person name="Cole S.T."/>
            <person name="Brosch R."/>
            <person name="Parkhill J."/>
            <person name="Garnier T."/>
            <person name="Churcher C.M."/>
            <person name="Harris D.E."/>
            <person name="Gordon S.V."/>
            <person name="Eiglmeier K."/>
            <person name="Gas S."/>
            <person name="Barry C.E. III"/>
            <person name="Tekaia F."/>
            <person name="Badcock K."/>
            <person name="Basham D."/>
            <person name="Brown D."/>
            <person name="Chillingworth T."/>
            <person name="Connor R."/>
            <person name="Davies R.M."/>
            <person name="Devlin K."/>
            <person name="Feltwell T."/>
            <person name="Gentles S."/>
            <person name="Hamlin N."/>
            <person name="Holroyd S."/>
            <person name="Hornsby T."/>
            <person name="Jagels K."/>
            <person name="Krogh A."/>
            <person name="McLean J."/>
            <person name="Moule S."/>
            <person name="Murphy L.D."/>
            <person name="Oliver S."/>
            <person name="Osborne J."/>
            <person name="Quail M.A."/>
            <person name="Rajandream M.A."/>
            <person name="Rogers J."/>
            <person name="Rutter S."/>
            <person name="Seeger K."/>
            <person name="Skelton S."/>
            <person name="Squares S."/>
            <person name="Squares R."/>
            <person name="Sulston J.E."/>
            <person name="Taylor K."/>
            <person name="Whitehead S."/>
            <person name="Barrell B.G."/>
        </authorList>
    </citation>
    <scope>NUCLEOTIDE SEQUENCE [LARGE SCALE GENOMIC DNA]</scope>
    <source>
        <strain>ATCC 25618 / H37Rv</strain>
    </source>
</reference>
<reference key="2">
    <citation type="journal article" date="2011" name="Mol. Cell. Proteomics">
        <title>Proteogenomic analysis of Mycobacterium tuberculosis by high resolution mass spectrometry.</title>
        <authorList>
            <person name="Kelkar D.S."/>
            <person name="Kumar D."/>
            <person name="Kumar P."/>
            <person name="Balakrishnan L."/>
            <person name="Muthusamy B."/>
            <person name="Yadav A.K."/>
            <person name="Shrivastava P."/>
            <person name="Marimuthu A."/>
            <person name="Anand S."/>
            <person name="Sundaram H."/>
            <person name="Kingsbury R."/>
            <person name="Harsha H.C."/>
            <person name="Nair B."/>
            <person name="Prasad T.S."/>
            <person name="Chauhan D.S."/>
            <person name="Katoch K."/>
            <person name="Katoch V.M."/>
            <person name="Kumar P."/>
            <person name="Chaerkady R."/>
            <person name="Ramachandran S."/>
            <person name="Dash D."/>
            <person name="Pandey A."/>
        </authorList>
    </citation>
    <scope>IDENTIFICATION BY MASS SPECTROMETRY [LARGE SCALE ANALYSIS]</scope>
    <source>
        <strain>ATCC 25618 / H37Rv</strain>
    </source>
</reference>
<evidence type="ECO:0000255" key="1">
    <source>
        <dbReference type="PROSITE-ProRule" id="PRU00434"/>
    </source>
</evidence>
<evidence type="ECO:0000305" key="2"/>
<protein>
    <recommendedName>
        <fullName>Uncharacterized ABC transporter ATP-binding protein Rv2564</fullName>
    </recommendedName>
</protein>
<name>Y2564_MYCTU</name>
<sequence>MGGLTISDLVVEYSSGGYAVRPIDGLSLDVAPGSLVILLGPSGCGKTTLLSCLGGILRPKSGSIKFDDVDITTLEGAALAKYRRDKVGIVFQAFNLVSSLTALENVMVPLRAAGVSRAAARKRAEDLLIRVNLGERMKHRPGDMSGGQQQRVAVARAIALDPQLILADEPTAHLDFIQVEEVLRLIRSLAQGDRVVVVATHDSRMLPLADRVLELMPAQVSPNQPPETVHVKAGEVLFEQSTMGDLIYVVSEGEFEIVRELADGGEELVKTAAPGDYFGEIGVLFHLPRSATVRARSDATAVGYTAQAFRERLGVTRVADLIEHRELASE</sequence>
<organism>
    <name type="scientific">Mycobacterium tuberculosis (strain ATCC 25618 / H37Rv)</name>
    <dbReference type="NCBI Taxonomy" id="83332"/>
    <lineage>
        <taxon>Bacteria</taxon>
        <taxon>Bacillati</taxon>
        <taxon>Actinomycetota</taxon>
        <taxon>Actinomycetes</taxon>
        <taxon>Mycobacteriales</taxon>
        <taxon>Mycobacteriaceae</taxon>
        <taxon>Mycobacterium</taxon>
        <taxon>Mycobacterium tuberculosis complex</taxon>
    </lineage>
</organism>
<proteinExistence type="evidence at protein level"/>
<accession>P9WQI5</accession>
<accession>L0TA01</accession>
<accession>P63401</accession>
<accession>Q50734</accession>
<keyword id="KW-0067">ATP-binding</keyword>
<keyword id="KW-0547">Nucleotide-binding</keyword>
<keyword id="KW-1185">Reference proteome</keyword>
<keyword id="KW-0813">Transport</keyword>
<comment type="similarity">
    <text evidence="2">Belongs to the ABC transporter superfamily.</text>
</comment>
<feature type="chain" id="PRO_0000093268" description="Uncharacterized ABC transporter ATP-binding protein Rv2564">
    <location>
        <begin position="1"/>
        <end position="330"/>
    </location>
</feature>
<feature type="domain" description="ABC transporter" evidence="1">
    <location>
        <begin position="4"/>
        <end position="242"/>
    </location>
</feature>
<feature type="binding site" evidence="1">
    <location>
        <begin position="40"/>
        <end position="47"/>
    </location>
    <ligand>
        <name>ATP</name>
        <dbReference type="ChEBI" id="CHEBI:30616"/>
    </ligand>
</feature>
<feature type="binding site">
    <location>
        <begin position="210"/>
        <end position="330"/>
    </location>
    <ligand>
        <name>a nucleoside 3',5'-cyclic phosphate</name>
        <dbReference type="ChEBI" id="CHEBI:58464"/>
    </ligand>
</feature>